<feature type="chain" id="PRO_1000200161" description="UPF0102 protein Sbal223_3990">
    <location>
        <begin position="1"/>
        <end position="108"/>
    </location>
</feature>
<accession>B8EBD9</accession>
<comment type="similarity">
    <text evidence="1">Belongs to the UPF0102 family.</text>
</comment>
<gene>
    <name type="ordered locus">Sbal223_3990</name>
</gene>
<reference key="1">
    <citation type="submission" date="2008-12" db="EMBL/GenBank/DDBJ databases">
        <title>Complete sequence of chromosome of Shewanella baltica OS223.</title>
        <authorList>
            <consortium name="US DOE Joint Genome Institute"/>
            <person name="Lucas S."/>
            <person name="Copeland A."/>
            <person name="Lapidus A."/>
            <person name="Glavina del Rio T."/>
            <person name="Dalin E."/>
            <person name="Tice H."/>
            <person name="Bruce D."/>
            <person name="Goodwin L."/>
            <person name="Pitluck S."/>
            <person name="Chertkov O."/>
            <person name="Meincke L."/>
            <person name="Brettin T."/>
            <person name="Detter J.C."/>
            <person name="Han C."/>
            <person name="Kuske C.R."/>
            <person name="Larimer F."/>
            <person name="Land M."/>
            <person name="Hauser L."/>
            <person name="Kyrpides N."/>
            <person name="Ovchinnikova G."/>
            <person name="Brettar I."/>
            <person name="Rodrigues J."/>
            <person name="Konstantinidis K."/>
            <person name="Tiedje J."/>
        </authorList>
    </citation>
    <scope>NUCLEOTIDE SEQUENCE [LARGE SCALE GENOMIC DNA]</scope>
    <source>
        <strain>OS223</strain>
    </source>
</reference>
<evidence type="ECO:0000255" key="1">
    <source>
        <dbReference type="HAMAP-Rule" id="MF_00048"/>
    </source>
</evidence>
<organism>
    <name type="scientific">Shewanella baltica (strain OS223)</name>
    <dbReference type="NCBI Taxonomy" id="407976"/>
    <lineage>
        <taxon>Bacteria</taxon>
        <taxon>Pseudomonadati</taxon>
        <taxon>Pseudomonadota</taxon>
        <taxon>Gammaproteobacteria</taxon>
        <taxon>Alteromonadales</taxon>
        <taxon>Shewanellaceae</taxon>
        <taxon>Shewanella</taxon>
    </lineage>
</organism>
<proteinExistence type="inferred from homology"/>
<dbReference type="EMBL" id="CP001252">
    <property type="protein sequence ID" value="ACK48463.1"/>
    <property type="molecule type" value="Genomic_DNA"/>
</dbReference>
<dbReference type="RefSeq" id="WP_006084496.1">
    <property type="nucleotide sequence ID" value="NC_011663.1"/>
</dbReference>
<dbReference type="SMR" id="B8EBD9"/>
<dbReference type="KEGG" id="sbp:Sbal223_3990"/>
<dbReference type="HOGENOM" id="CLU_115353_1_1_6"/>
<dbReference type="Proteomes" id="UP000002507">
    <property type="component" value="Chromosome"/>
</dbReference>
<dbReference type="GO" id="GO:0003676">
    <property type="term" value="F:nucleic acid binding"/>
    <property type="evidence" value="ECO:0007669"/>
    <property type="project" value="InterPro"/>
</dbReference>
<dbReference type="CDD" id="cd20736">
    <property type="entry name" value="PoNe_Nuclease"/>
    <property type="match status" value="1"/>
</dbReference>
<dbReference type="Gene3D" id="3.40.1350.10">
    <property type="match status" value="1"/>
</dbReference>
<dbReference type="HAMAP" id="MF_00048">
    <property type="entry name" value="UPF0102"/>
    <property type="match status" value="1"/>
</dbReference>
<dbReference type="InterPro" id="IPR011335">
    <property type="entry name" value="Restrct_endonuc-II-like"/>
</dbReference>
<dbReference type="InterPro" id="IPR011856">
    <property type="entry name" value="tRNA_endonuc-like_dom_sf"/>
</dbReference>
<dbReference type="InterPro" id="IPR003509">
    <property type="entry name" value="UPF0102_YraN-like"/>
</dbReference>
<dbReference type="NCBIfam" id="NF009150">
    <property type="entry name" value="PRK12497.1-3"/>
    <property type="match status" value="1"/>
</dbReference>
<dbReference type="NCBIfam" id="TIGR00252">
    <property type="entry name" value="YraN family protein"/>
    <property type="match status" value="1"/>
</dbReference>
<dbReference type="PANTHER" id="PTHR34039">
    <property type="entry name" value="UPF0102 PROTEIN YRAN"/>
    <property type="match status" value="1"/>
</dbReference>
<dbReference type="PANTHER" id="PTHR34039:SF1">
    <property type="entry name" value="UPF0102 PROTEIN YRAN"/>
    <property type="match status" value="1"/>
</dbReference>
<dbReference type="Pfam" id="PF02021">
    <property type="entry name" value="UPF0102"/>
    <property type="match status" value="1"/>
</dbReference>
<dbReference type="SUPFAM" id="SSF52980">
    <property type="entry name" value="Restriction endonuclease-like"/>
    <property type="match status" value="1"/>
</dbReference>
<name>Y3990_SHEB2</name>
<sequence length="108" mass="12561">MTLGQQAEAHAQRYLEQQGLTFVERNVRYPFGEIDLIMRHKSHWVFVEVKYRSATQYGGALQALSAAQITRIRKAANHYLQLNRLDVPCRFDVIAMEADQIHWLVDAF</sequence>
<protein>
    <recommendedName>
        <fullName evidence="1">UPF0102 protein Sbal223_3990</fullName>
    </recommendedName>
</protein>